<accession>Q83I72</accession>
<protein>
    <recommendedName>
        <fullName evidence="1">Small ribosomal subunit protein uS3</fullName>
    </recommendedName>
    <alternativeName>
        <fullName evidence="2">30S ribosomal protein S3</fullName>
    </alternativeName>
</protein>
<reference key="1">
    <citation type="journal article" date="2003" name="Lancet">
        <title>Sequencing and analysis of the genome of the Whipple's disease bacterium Tropheryma whipplei.</title>
        <authorList>
            <person name="Bentley S.D."/>
            <person name="Maiwald M."/>
            <person name="Murphy L.D."/>
            <person name="Pallen M.J."/>
            <person name="Yeats C.A."/>
            <person name="Dover L.G."/>
            <person name="Norbertczak H.T."/>
            <person name="Besra G.S."/>
            <person name="Quail M.A."/>
            <person name="Harris D.E."/>
            <person name="von Herbay A."/>
            <person name="Goble A."/>
            <person name="Rutter S."/>
            <person name="Squares R."/>
            <person name="Squares S."/>
            <person name="Barrell B.G."/>
            <person name="Parkhill J."/>
            <person name="Relman D.A."/>
        </authorList>
    </citation>
    <scope>NUCLEOTIDE SEQUENCE [LARGE SCALE GENOMIC DNA]</scope>
    <source>
        <strain>TW08/27</strain>
    </source>
</reference>
<dbReference type="EMBL" id="BX251410">
    <property type="protein sequence ID" value="CAD66890.1"/>
    <property type="molecule type" value="Genomic_DNA"/>
</dbReference>
<dbReference type="RefSeq" id="WP_011096171.1">
    <property type="nucleotide sequence ID" value="NC_004551.1"/>
</dbReference>
<dbReference type="SMR" id="Q83I72"/>
<dbReference type="GeneID" id="67387989"/>
<dbReference type="KEGG" id="tws:TW213"/>
<dbReference type="HOGENOM" id="CLU_058591_0_2_11"/>
<dbReference type="GO" id="GO:0022627">
    <property type="term" value="C:cytosolic small ribosomal subunit"/>
    <property type="evidence" value="ECO:0007669"/>
    <property type="project" value="TreeGrafter"/>
</dbReference>
<dbReference type="GO" id="GO:0003729">
    <property type="term" value="F:mRNA binding"/>
    <property type="evidence" value="ECO:0007669"/>
    <property type="project" value="UniProtKB-UniRule"/>
</dbReference>
<dbReference type="GO" id="GO:0019843">
    <property type="term" value="F:rRNA binding"/>
    <property type="evidence" value="ECO:0007669"/>
    <property type="project" value="UniProtKB-UniRule"/>
</dbReference>
<dbReference type="GO" id="GO:0003735">
    <property type="term" value="F:structural constituent of ribosome"/>
    <property type="evidence" value="ECO:0007669"/>
    <property type="project" value="InterPro"/>
</dbReference>
<dbReference type="GO" id="GO:0006412">
    <property type="term" value="P:translation"/>
    <property type="evidence" value="ECO:0007669"/>
    <property type="project" value="UniProtKB-UniRule"/>
</dbReference>
<dbReference type="CDD" id="cd02412">
    <property type="entry name" value="KH-II_30S_S3"/>
    <property type="match status" value="1"/>
</dbReference>
<dbReference type="FunFam" id="3.30.300.20:FF:000001">
    <property type="entry name" value="30S ribosomal protein S3"/>
    <property type="match status" value="1"/>
</dbReference>
<dbReference type="Gene3D" id="3.30.300.20">
    <property type="match status" value="1"/>
</dbReference>
<dbReference type="Gene3D" id="3.30.1140.32">
    <property type="entry name" value="Ribosomal protein S3, C-terminal domain"/>
    <property type="match status" value="1"/>
</dbReference>
<dbReference type="HAMAP" id="MF_01309_B">
    <property type="entry name" value="Ribosomal_uS3_B"/>
    <property type="match status" value="1"/>
</dbReference>
<dbReference type="InterPro" id="IPR004087">
    <property type="entry name" value="KH_dom"/>
</dbReference>
<dbReference type="InterPro" id="IPR015946">
    <property type="entry name" value="KH_dom-like_a/b"/>
</dbReference>
<dbReference type="InterPro" id="IPR004044">
    <property type="entry name" value="KH_dom_type_2"/>
</dbReference>
<dbReference type="InterPro" id="IPR009019">
    <property type="entry name" value="KH_sf_prok-type"/>
</dbReference>
<dbReference type="InterPro" id="IPR036419">
    <property type="entry name" value="Ribosomal_S3_C_sf"/>
</dbReference>
<dbReference type="InterPro" id="IPR005704">
    <property type="entry name" value="Ribosomal_uS3_bac-typ"/>
</dbReference>
<dbReference type="InterPro" id="IPR001351">
    <property type="entry name" value="Ribosomal_uS3_C"/>
</dbReference>
<dbReference type="InterPro" id="IPR018280">
    <property type="entry name" value="Ribosomal_uS3_CS"/>
</dbReference>
<dbReference type="NCBIfam" id="TIGR01009">
    <property type="entry name" value="rpsC_bact"/>
    <property type="match status" value="1"/>
</dbReference>
<dbReference type="PANTHER" id="PTHR11760">
    <property type="entry name" value="30S/40S RIBOSOMAL PROTEIN S3"/>
    <property type="match status" value="1"/>
</dbReference>
<dbReference type="PANTHER" id="PTHR11760:SF19">
    <property type="entry name" value="SMALL RIBOSOMAL SUBUNIT PROTEIN US3C"/>
    <property type="match status" value="1"/>
</dbReference>
<dbReference type="Pfam" id="PF07650">
    <property type="entry name" value="KH_2"/>
    <property type="match status" value="1"/>
</dbReference>
<dbReference type="Pfam" id="PF00189">
    <property type="entry name" value="Ribosomal_S3_C"/>
    <property type="match status" value="1"/>
</dbReference>
<dbReference type="SMART" id="SM00322">
    <property type="entry name" value="KH"/>
    <property type="match status" value="1"/>
</dbReference>
<dbReference type="SUPFAM" id="SSF54814">
    <property type="entry name" value="Prokaryotic type KH domain (KH-domain type II)"/>
    <property type="match status" value="1"/>
</dbReference>
<dbReference type="SUPFAM" id="SSF54821">
    <property type="entry name" value="Ribosomal protein S3 C-terminal domain"/>
    <property type="match status" value="1"/>
</dbReference>
<dbReference type="PROSITE" id="PS50823">
    <property type="entry name" value="KH_TYPE_2"/>
    <property type="match status" value="1"/>
</dbReference>
<dbReference type="PROSITE" id="PS00548">
    <property type="entry name" value="RIBOSOMAL_S3"/>
    <property type="match status" value="1"/>
</dbReference>
<evidence type="ECO:0000255" key="1">
    <source>
        <dbReference type="HAMAP-Rule" id="MF_01309"/>
    </source>
</evidence>
<evidence type="ECO:0000305" key="2"/>
<gene>
    <name evidence="1" type="primary">rpsC</name>
    <name type="ordered locus">TW213</name>
</gene>
<keyword id="KW-0687">Ribonucleoprotein</keyword>
<keyword id="KW-0689">Ribosomal protein</keyword>
<keyword id="KW-0694">RNA-binding</keyword>
<keyword id="KW-0699">rRNA-binding</keyword>
<sequence>MGQKINPYGLRLGITTDHVSHWYSDSTRPGQRYADYVSEDIKIRSYLTKTLDRAGIARIEIERTRDRIRVDIYTARPGIVIGRRGAEADRYRLELEKITSKQVQLNILEVKNPETTARLVAQGIAEQLAARVAFRRAMRKGLQSATSAGVRGIRIRLAGRLGGAEISRSEFYIEGQVPLQTLRASIDYGFYEARTPYGHIGVKVWIYKKPSVRGRTEGGG</sequence>
<feature type="chain" id="PRO_0000130227" description="Small ribosomal subunit protein uS3">
    <location>
        <begin position="1"/>
        <end position="220"/>
    </location>
</feature>
<feature type="domain" description="KH type-2" evidence="1">
    <location>
        <begin position="43"/>
        <end position="111"/>
    </location>
</feature>
<name>RS3_TROW8</name>
<comment type="function">
    <text evidence="1">Binds the lower part of the 30S subunit head. Binds mRNA in the 70S ribosome, positioning it for translation.</text>
</comment>
<comment type="subunit">
    <text evidence="1">Part of the 30S ribosomal subunit. Forms a tight complex with proteins S10 and S14.</text>
</comment>
<comment type="similarity">
    <text evidence="1">Belongs to the universal ribosomal protein uS3 family.</text>
</comment>
<proteinExistence type="inferred from homology"/>
<organism>
    <name type="scientific">Tropheryma whipplei (strain TW08/27)</name>
    <name type="common">Whipple's bacillus</name>
    <dbReference type="NCBI Taxonomy" id="218496"/>
    <lineage>
        <taxon>Bacteria</taxon>
        <taxon>Bacillati</taxon>
        <taxon>Actinomycetota</taxon>
        <taxon>Actinomycetes</taxon>
        <taxon>Micrococcales</taxon>
        <taxon>Tropherymataceae</taxon>
        <taxon>Tropheryma</taxon>
    </lineage>
</organism>